<evidence type="ECO:0000305" key="1"/>
<protein>
    <recommendedName>
        <fullName>Coat protein</fullName>
    </recommendedName>
    <alternativeName>
        <fullName>Capsid protein</fullName>
        <shortName>CP</shortName>
    </alternativeName>
</protein>
<organism>
    <name type="scientific">Plantago asiatica mosaic potexvirus</name>
    <name type="common">P1AMV</name>
    <dbReference type="NCBI Taxonomy" id="28354"/>
    <lineage>
        <taxon>Viruses</taxon>
        <taxon>Riboviria</taxon>
        <taxon>Orthornavirae</taxon>
        <taxon>Kitrinoviricota</taxon>
        <taxon>Alsuviricetes</taxon>
        <taxon>Tymovirales</taxon>
        <taxon>Alphaflexiviridae</taxon>
        <taxon>Potexvirus</taxon>
    </lineage>
</organism>
<feature type="chain" id="PRO_0000222623" description="Coat protein">
    <location>
        <begin position="1"/>
        <end position="207"/>
    </location>
</feature>
<comment type="function">
    <text>Required for genome encapsidation. Forms ribonucleoprotein complexes along with TGB1 helicase and viral RNA.</text>
</comment>
<comment type="subcellular location">
    <subcellularLocation>
        <location evidence="1">Virion</location>
    </subcellularLocation>
</comment>
<comment type="similarity">
    <text evidence="1">Belongs to the potexvirus capsid protein family.</text>
</comment>
<comment type="caution">
    <text evidence="1">It is uncertain whether Met-1 or Met-15 is the initiator.</text>
</comment>
<sequence>MALNTAPTADALAAMAFPVSSPSVPTAQELDTITSGLTTLGVPTDSLLSHALALVNACFDAGSSSFVTLSGPSPTPTISLAQIAGVVKVTTTLRKFCRFYAKIIWNARLARNLPPAGFARANIKFEHRWAGFDFFDGLLNPAALEPPGGLSRTPTPDEVTANETARSLNLFEARASYSNLASTSTQFTRGQLSNTAPQVQFLPAPSD</sequence>
<accession>Q07506</accession>
<dbReference type="EMBL" id="Z21647">
    <property type="protein sequence ID" value="CAA79765.1"/>
    <property type="molecule type" value="Genomic_RNA"/>
</dbReference>
<dbReference type="PIR" id="S34234">
    <property type="entry name" value="S34234"/>
</dbReference>
<dbReference type="RefSeq" id="NP_620840.1">
    <property type="nucleotide sequence ID" value="NC_003849.1"/>
</dbReference>
<dbReference type="SMR" id="Q07506"/>
<dbReference type="GeneID" id="944432"/>
<dbReference type="KEGG" id="vg:944432"/>
<dbReference type="OrthoDB" id="15901at10239"/>
<dbReference type="Proteomes" id="UP000009190">
    <property type="component" value="Genome"/>
</dbReference>
<dbReference type="GO" id="GO:0019029">
    <property type="term" value="C:helical viral capsid"/>
    <property type="evidence" value="ECO:0007669"/>
    <property type="project" value="UniProtKB-KW"/>
</dbReference>
<dbReference type="GO" id="GO:1990904">
    <property type="term" value="C:ribonucleoprotein complex"/>
    <property type="evidence" value="ECO:0007669"/>
    <property type="project" value="UniProtKB-KW"/>
</dbReference>
<dbReference type="GO" id="GO:0005198">
    <property type="term" value="F:structural molecule activity"/>
    <property type="evidence" value="ECO:0007669"/>
    <property type="project" value="InterPro"/>
</dbReference>
<dbReference type="InterPro" id="IPR000052">
    <property type="entry name" value="Pltvir_coat"/>
</dbReference>
<dbReference type="Pfam" id="PF00286">
    <property type="entry name" value="Flexi_CP"/>
    <property type="match status" value="1"/>
</dbReference>
<dbReference type="PRINTS" id="PR00232">
    <property type="entry name" value="POTXCARLCOAT"/>
</dbReference>
<dbReference type="PROSITE" id="PS00418">
    <property type="entry name" value="POTEX_CARLAVIRUS_COAT"/>
    <property type="match status" value="1"/>
</dbReference>
<organismHost>
    <name type="scientific">Plantago asiatica</name>
    <dbReference type="NCBI Taxonomy" id="197796"/>
</organismHost>
<proteinExistence type="inferred from homology"/>
<keyword id="KW-0167">Capsid protein</keyword>
<keyword id="KW-1139">Helical capsid protein</keyword>
<keyword id="KW-1185">Reference proteome</keyword>
<keyword id="KW-0687">Ribonucleoprotein</keyword>
<keyword id="KW-0946">Virion</keyword>
<name>CAPSD_P1AMV</name>
<reference key="1">
    <citation type="journal article" date="1994" name="J. Gen. Virol.">
        <title>Genome characterization and taxonomy of Plantago asiatica mosaic potexvirus.</title>
        <authorList>
            <person name="Solovyev A.G."/>
            <person name="Novikov V.K."/>
            <person name="Merits A."/>
            <person name="Savenkov E.I."/>
            <person name="Zelenina D.A."/>
            <person name="Tyulkina L.G."/>
            <person name="Morozov S.Y."/>
        </authorList>
    </citation>
    <scope>NUCLEOTIDE SEQUENCE [GENOMIC RNA]</scope>
</reference>
<reference key="2">
    <citation type="journal article" date="2005" name="Mol. Plant Microbe Interact.">
        <title>A new cell-to-cell transport model for Potexviruses.</title>
        <authorList>
            <person name="Verchot-Lubicz J."/>
        </authorList>
    </citation>
    <scope>REVIEW</scope>
</reference>
<reference key="3">
    <citation type="journal article" date="1993" name="Dokl. Akad. Nauk">
        <title>Primary structure of the triple block RNA genes of the Plantago asiatica mosaic virus.</title>
        <authorList>
            <person name="Solovyev A.G."/>
            <person name="Novikov V.K."/>
            <person name="Morozov S.I."/>
            <person name="Kagramanov V.N."/>
            <person name="Atabekov I.G."/>
        </authorList>
    </citation>
    <scope>NUCLEOTIDE SEQUENCE [GENOMIC RNA]</scope>
</reference>